<dbReference type="EMBL" id="AK097459">
    <property type="protein sequence ID" value="BAC05061.1"/>
    <property type="molecule type" value="mRNA"/>
</dbReference>
<dbReference type="EMBL" id="AC147651">
    <property type="status" value="NOT_ANNOTATED_CDS"/>
    <property type="molecule type" value="Genomic_DNA"/>
</dbReference>
<dbReference type="IntAct" id="Q8N814">
    <property type="interactions" value="1"/>
</dbReference>
<dbReference type="BioMuta" id="-"/>
<dbReference type="DMDM" id="74729335"/>
<dbReference type="neXtProt" id="NX_Q8N814"/>
<dbReference type="InParanoid" id="Q8N814"/>
<dbReference type="PAN-GO" id="Q8N814">
    <property type="GO annotations" value="0 GO annotations based on evolutionary models"/>
</dbReference>
<dbReference type="PathwayCommons" id="Q8N814"/>
<dbReference type="Pharos" id="Q8N814">
    <property type="development level" value="Tdark"/>
</dbReference>
<dbReference type="Proteomes" id="UP000005640">
    <property type="component" value="Unplaced"/>
</dbReference>
<dbReference type="RNAct" id="Q8N814">
    <property type="molecule type" value="protein"/>
</dbReference>
<feature type="chain" id="PRO_0000348081" description="Putative uncharacterized protein FLJ40140">
    <location>
        <begin position="1"/>
        <end position="137"/>
    </location>
</feature>
<feature type="region of interest" description="Disordered" evidence="1">
    <location>
        <begin position="31"/>
        <end position="83"/>
    </location>
</feature>
<protein>
    <recommendedName>
        <fullName>Putative uncharacterized protein FLJ40140</fullName>
    </recommendedName>
</protein>
<sequence>MGWVIPEWPGAQSCPTAAQVAQPVPFMCNAPASPINDKEKDKAGGRLPSGSEPRARAFCEAGADGEQGDPSPADTIKANQGHIPAAPGETGSVICWCDQSVAPPRPAGLSVSGRQSYLVGCFRWVLTFFFSVFYLTP</sequence>
<organism>
    <name type="scientific">Homo sapiens</name>
    <name type="common">Human</name>
    <dbReference type="NCBI Taxonomy" id="9606"/>
    <lineage>
        <taxon>Eukaryota</taxon>
        <taxon>Metazoa</taxon>
        <taxon>Chordata</taxon>
        <taxon>Craniata</taxon>
        <taxon>Vertebrata</taxon>
        <taxon>Euteleostomi</taxon>
        <taxon>Mammalia</taxon>
        <taxon>Eutheria</taxon>
        <taxon>Euarchontoglires</taxon>
        <taxon>Primates</taxon>
        <taxon>Haplorrhini</taxon>
        <taxon>Catarrhini</taxon>
        <taxon>Hominidae</taxon>
        <taxon>Homo</taxon>
    </lineage>
</organism>
<evidence type="ECO:0000256" key="1">
    <source>
        <dbReference type="SAM" id="MobiDB-lite"/>
    </source>
</evidence>
<evidence type="ECO:0000305" key="2"/>
<proteinExistence type="uncertain"/>
<reference key="1">
    <citation type="journal article" date="2004" name="Nat. Genet.">
        <title>Complete sequencing and characterization of 21,243 full-length human cDNAs.</title>
        <authorList>
            <person name="Ota T."/>
            <person name="Suzuki Y."/>
            <person name="Nishikawa T."/>
            <person name="Otsuki T."/>
            <person name="Sugiyama T."/>
            <person name="Irie R."/>
            <person name="Wakamatsu A."/>
            <person name="Hayashi K."/>
            <person name="Sato H."/>
            <person name="Nagai K."/>
            <person name="Kimura K."/>
            <person name="Makita H."/>
            <person name="Sekine M."/>
            <person name="Obayashi M."/>
            <person name="Nishi T."/>
            <person name="Shibahara T."/>
            <person name="Tanaka T."/>
            <person name="Ishii S."/>
            <person name="Yamamoto J."/>
            <person name="Saito K."/>
            <person name="Kawai Y."/>
            <person name="Isono Y."/>
            <person name="Nakamura Y."/>
            <person name="Nagahari K."/>
            <person name="Murakami K."/>
            <person name="Yasuda T."/>
            <person name="Iwayanagi T."/>
            <person name="Wagatsuma M."/>
            <person name="Shiratori A."/>
            <person name="Sudo H."/>
            <person name="Hosoiri T."/>
            <person name="Kaku Y."/>
            <person name="Kodaira H."/>
            <person name="Kondo H."/>
            <person name="Sugawara M."/>
            <person name="Takahashi M."/>
            <person name="Kanda K."/>
            <person name="Yokoi T."/>
            <person name="Furuya T."/>
            <person name="Kikkawa E."/>
            <person name="Omura Y."/>
            <person name="Abe K."/>
            <person name="Kamihara K."/>
            <person name="Katsuta N."/>
            <person name="Sato K."/>
            <person name="Tanikawa M."/>
            <person name="Yamazaki M."/>
            <person name="Ninomiya K."/>
            <person name="Ishibashi T."/>
            <person name="Yamashita H."/>
            <person name="Murakawa K."/>
            <person name="Fujimori K."/>
            <person name="Tanai H."/>
            <person name="Kimata M."/>
            <person name="Watanabe M."/>
            <person name="Hiraoka S."/>
            <person name="Chiba Y."/>
            <person name="Ishida S."/>
            <person name="Ono Y."/>
            <person name="Takiguchi S."/>
            <person name="Watanabe S."/>
            <person name="Yosida M."/>
            <person name="Hotuta T."/>
            <person name="Kusano J."/>
            <person name="Kanehori K."/>
            <person name="Takahashi-Fujii A."/>
            <person name="Hara H."/>
            <person name="Tanase T.-O."/>
            <person name="Nomura Y."/>
            <person name="Togiya S."/>
            <person name="Komai F."/>
            <person name="Hara R."/>
            <person name="Takeuchi K."/>
            <person name="Arita M."/>
            <person name="Imose N."/>
            <person name="Musashino K."/>
            <person name="Yuuki H."/>
            <person name="Oshima A."/>
            <person name="Sasaki N."/>
            <person name="Aotsuka S."/>
            <person name="Yoshikawa Y."/>
            <person name="Matsunawa H."/>
            <person name="Ichihara T."/>
            <person name="Shiohata N."/>
            <person name="Sano S."/>
            <person name="Moriya S."/>
            <person name="Momiyama H."/>
            <person name="Satoh N."/>
            <person name="Takami S."/>
            <person name="Terashima Y."/>
            <person name="Suzuki O."/>
            <person name="Nakagawa S."/>
            <person name="Senoh A."/>
            <person name="Mizoguchi H."/>
            <person name="Goto Y."/>
            <person name="Shimizu F."/>
            <person name="Wakebe H."/>
            <person name="Hishigaki H."/>
            <person name="Watanabe T."/>
            <person name="Sugiyama A."/>
            <person name="Takemoto M."/>
            <person name="Kawakami B."/>
            <person name="Yamazaki M."/>
            <person name="Watanabe K."/>
            <person name="Kumagai A."/>
            <person name="Itakura S."/>
            <person name="Fukuzumi Y."/>
            <person name="Fujimori Y."/>
            <person name="Komiyama M."/>
            <person name="Tashiro H."/>
            <person name="Tanigami A."/>
            <person name="Fujiwara T."/>
            <person name="Ono T."/>
            <person name="Yamada K."/>
            <person name="Fujii Y."/>
            <person name="Ozaki K."/>
            <person name="Hirao M."/>
            <person name="Ohmori Y."/>
            <person name="Kawabata A."/>
            <person name="Hikiji T."/>
            <person name="Kobatake N."/>
            <person name="Inagaki H."/>
            <person name="Ikema Y."/>
            <person name="Okamoto S."/>
            <person name="Okitani R."/>
            <person name="Kawakami T."/>
            <person name="Noguchi S."/>
            <person name="Itoh T."/>
            <person name="Shigeta K."/>
            <person name="Senba T."/>
            <person name="Matsumura K."/>
            <person name="Nakajima Y."/>
            <person name="Mizuno T."/>
            <person name="Morinaga M."/>
            <person name="Sasaki M."/>
            <person name="Togashi T."/>
            <person name="Oyama M."/>
            <person name="Hata H."/>
            <person name="Watanabe M."/>
            <person name="Komatsu T."/>
            <person name="Mizushima-Sugano J."/>
            <person name="Satoh T."/>
            <person name="Shirai Y."/>
            <person name="Takahashi Y."/>
            <person name="Nakagawa K."/>
            <person name="Okumura K."/>
            <person name="Nagase T."/>
            <person name="Nomura N."/>
            <person name="Kikuchi H."/>
            <person name="Masuho Y."/>
            <person name="Yamashita R."/>
            <person name="Nakai K."/>
            <person name="Yada T."/>
            <person name="Nakamura Y."/>
            <person name="Ohara O."/>
            <person name="Isogai T."/>
            <person name="Sugano S."/>
        </authorList>
    </citation>
    <scope>NUCLEOTIDE SEQUENCE [LARGE SCALE MRNA]</scope>
    <source>
        <tissue>Testis</tissue>
    </source>
</reference>
<reference key="2">
    <citation type="journal article" date="2003" name="Nature">
        <title>The DNA sequence of human chromosome 7.</title>
        <authorList>
            <person name="Hillier L.W."/>
            <person name="Fulton R.S."/>
            <person name="Fulton L.A."/>
            <person name="Graves T.A."/>
            <person name="Pepin K.H."/>
            <person name="Wagner-McPherson C."/>
            <person name="Layman D."/>
            <person name="Maas J."/>
            <person name="Jaeger S."/>
            <person name="Walker R."/>
            <person name="Wylie K."/>
            <person name="Sekhon M."/>
            <person name="Becker M.C."/>
            <person name="O'Laughlin M.D."/>
            <person name="Schaller M.E."/>
            <person name="Fewell G.A."/>
            <person name="Delehaunty K.D."/>
            <person name="Miner T.L."/>
            <person name="Nash W.E."/>
            <person name="Cordes M."/>
            <person name="Du H."/>
            <person name="Sun H."/>
            <person name="Edwards J."/>
            <person name="Bradshaw-Cordum H."/>
            <person name="Ali J."/>
            <person name="Andrews S."/>
            <person name="Isak A."/>
            <person name="Vanbrunt A."/>
            <person name="Nguyen C."/>
            <person name="Du F."/>
            <person name="Lamar B."/>
            <person name="Courtney L."/>
            <person name="Kalicki J."/>
            <person name="Ozersky P."/>
            <person name="Bielicki L."/>
            <person name="Scott K."/>
            <person name="Holmes A."/>
            <person name="Harkins R."/>
            <person name="Harris A."/>
            <person name="Strong C.M."/>
            <person name="Hou S."/>
            <person name="Tomlinson C."/>
            <person name="Dauphin-Kohlberg S."/>
            <person name="Kozlowicz-Reilly A."/>
            <person name="Leonard S."/>
            <person name="Rohlfing T."/>
            <person name="Rock S.M."/>
            <person name="Tin-Wollam A.-M."/>
            <person name="Abbott A."/>
            <person name="Minx P."/>
            <person name="Maupin R."/>
            <person name="Strowmatt C."/>
            <person name="Latreille P."/>
            <person name="Miller N."/>
            <person name="Johnson D."/>
            <person name="Murray J."/>
            <person name="Woessner J.P."/>
            <person name="Wendl M.C."/>
            <person name="Yang S.-P."/>
            <person name="Schultz B.R."/>
            <person name="Wallis J.W."/>
            <person name="Spieth J."/>
            <person name="Bieri T.A."/>
            <person name="Nelson J.O."/>
            <person name="Berkowicz N."/>
            <person name="Wohldmann P.E."/>
            <person name="Cook L.L."/>
            <person name="Hickenbotham M.T."/>
            <person name="Eldred J."/>
            <person name="Williams D."/>
            <person name="Bedell J.A."/>
            <person name="Mardis E.R."/>
            <person name="Clifton S.W."/>
            <person name="Chissoe S.L."/>
            <person name="Marra M.A."/>
            <person name="Raymond C."/>
            <person name="Haugen E."/>
            <person name="Gillett W."/>
            <person name="Zhou Y."/>
            <person name="James R."/>
            <person name="Phelps K."/>
            <person name="Iadanoto S."/>
            <person name="Bubb K."/>
            <person name="Simms E."/>
            <person name="Levy R."/>
            <person name="Clendenning J."/>
            <person name="Kaul R."/>
            <person name="Kent W.J."/>
            <person name="Furey T.S."/>
            <person name="Baertsch R.A."/>
            <person name="Brent M.R."/>
            <person name="Keibler E."/>
            <person name="Flicek P."/>
            <person name="Bork P."/>
            <person name="Suyama M."/>
            <person name="Bailey J.A."/>
            <person name="Portnoy M.E."/>
            <person name="Torrents D."/>
            <person name="Chinwalla A.T."/>
            <person name="Gish W.R."/>
            <person name="Eddy S.R."/>
            <person name="McPherson J.D."/>
            <person name="Olson M.V."/>
            <person name="Eichler E.E."/>
            <person name="Green E.D."/>
            <person name="Waterston R.H."/>
            <person name="Wilson R.K."/>
        </authorList>
    </citation>
    <scope>NUCLEOTIDE SEQUENCE [LARGE SCALE GENOMIC DNA]</scope>
</reference>
<keyword id="KW-1185">Reference proteome</keyword>
<accession>Q8N814</accession>
<comment type="caution">
    <text evidence="2">Product of a dubious CDS prediction.</text>
</comment>
<name>YG045_HUMAN</name>